<protein>
    <recommendedName>
        <fullName>Auxin-responsive protein IAA10</fullName>
    </recommendedName>
    <alternativeName>
        <fullName>Indoleacetic acid-induced protein 10</fullName>
    </alternativeName>
</protein>
<gene>
    <name type="primary">IAA10</name>
    <name type="ORF">OsI_009261</name>
</gene>
<proteinExistence type="evidence at transcript level"/>
<accession>A2XB18</accession>
<accession>Q59AA1</accession>
<accession>Q6K695</accession>
<accession>Q6K696</accession>
<dbReference type="EMBL" id="AJ748648">
    <property type="protein sequence ID" value="CAG38421.1"/>
    <property type="molecule type" value="mRNA"/>
</dbReference>
<dbReference type="EMBL" id="CM000127">
    <property type="status" value="NOT_ANNOTATED_CDS"/>
    <property type="molecule type" value="Genomic_DNA"/>
</dbReference>
<dbReference type="SMR" id="A2XB18"/>
<dbReference type="STRING" id="39946.A2XB18"/>
<dbReference type="Proteomes" id="UP000007015">
    <property type="component" value="Chromosome 2"/>
</dbReference>
<dbReference type="GO" id="GO:0005634">
    <property type="term" value="C:nucleus"/>
    <property type="evidence" value="ECO:0007669"/>
    <property type="project" value="UniProtKB-SubCell"/>
</dbReference>
<dbReference type="GO" id="GO:0009734">
    <property type="term" value="P:auxin-activated signaling pathway"/>
    <property type="evidence" value="ECO:0007669"/>
    <property type="project" value="UniProtKB-KW"/>
</dbReference>
<dbReference type="GO" id="GO:0006355">
    <property type="term" value="P:regulation of DNA-templated transcription"/>
    <property type="evidence" value="ECO:0007669"/>
    <property type="project" value="InterPro"/>
</dbReference>
<dbReference type="FunFam" id="3.10.20.90:FF:000078">
    <property type="entry name" value="Auxin-responsive protein"/>
    <property type="match status" value="1"/>
</dbReference>
<dbReference type="Gene3D" id="3.10.20.90">
    <property type="entry name" value="Phosphatidylinositol 3-kinase Catalytic Subunit, Chain A, domain 1"/>
    <property type="match status" value="1"/>
</dbReference>
<dbReference type="InterPro" id="IPR033389">
    <property type="entry name" value="AUX/IAA_dom"/>
</dbReference>
<dbReference type="InterPro" id="IPR003311">
    <property type="entry name" value="AUX_IAA"/>
</dbReference>
<dbReference type="InterPro" id="IPR053793">
    <property type="entry name" value="PB1-like"/>
</dbReference>
<dbReference type="PANTHER" id="PTHR31734:SF6">
    <property type="entry name" value="AUXIN-RESPONSIVE PROTEIN IAA11"/>
    <property type="match status" value="1"/>
</dbReference>
<dbReference type="PANTHER" id="PTHR31734">
    <property type="entry name" value="AUXIN-RESPONSIVE PROTEIN IAA17"/>
    <property type="match status" value="1"/>
</dbReference>
<dbReference type="Pfam" id="PF02309">
    <property type="entry name" value="AUX_IAA"/>
    <property type="match status" value="1"/>
</dbReference>
<dbReference type="SUPFAM" id="SSF54277">
    <property type="entry name" value="CAD &amp; PB1 domains"/>
    <property type="match status" value="1"/>
</dbReference>
<dbReference type="PROSITE" id="PS51745">
    <property type="entry name" value="PB1"/>
    <property type="match status" value="1"/>
</dbReference>
<name>IAA10_ORYSI</name>
<organism>
    <name type="scientific">Oryza sativa subsp. indica</name>
    <name type="common">Rice</name>
    <dbReference type="NCBI Taxonomy" id="39946"/>
    <lineage>
        <taxon>Eukaryota</taxon>
        <taxon>Viridiplantae</taxon>
        <taxon>Streptophyta</taxon>
        <taxon>Embryophyta</taxon>
        <taxon>Tracheophyta</taxon>
        <taxon>Spermatophyta</taxon>
        <taxon>Magnoliopsida</taxon>
        <taxon>Liliopsida</taxon>
        <taxon>Poales</taxon>
        <taxon>Poaceae</taxon>
        <taxon>BOP clade</taxon>
        <taxon>Oryzoideae</taxon>
        <taxon>Oryzeae</taxon>
        <taxon>Oryzinae</taxon>
        <taxon>Oryza</taxon>
        <taxon>Oryza sativa</taxon>
    </lineage>
</organism>
<feature type="chain" id="PRO_0000291397" description="Auxin-responsive protein IAA10">
    <location>
        <begin position="1"/>
        <end position="281"/>
    </location>
</feature>
<feature type="domain" description="PB1" evidence="2">
    <location>
        <begin position="163"/>
        <end position="259"/>
    </location>
</feature>
<feature type="region of interest" description="Disordered" evidence="3">
    <location>
        <begin position="1"/>
        <end position="115"/>
    </location>
</feature>
<feature type="region of interest" description="Disordered" evidence="3">
    <location>
        <begin position="130"/>
        <end position="157"/>
    </location>
</feature>
<feature type="short sequence motif" description="EAR-like (transcriptional repression)" evidence="1">
    <location>
        <begin position="36"/>
        <end position="40"/>
    </location>
</feature>
<feature type="compositionally biased region" description="Low complexity" evidence="3">
    <location>
        <begin position="7"/>
        <end position="17"/>
    </location>
</feature>
<feature type="compositionally biased region" description="Acidic residues" evidence="3">
    <location>
        <begin position="18"/>
        <end position="35"/>
    </location>
</feature>
<feature type="compositionally biased region" description="Low complexity" evidence="3">
    <location>
        <begin position="36"/>
        <end position="49"/>
    </location>
</feature>
<feature type="compositionally biased region" description="Low complexity" evidence="3">
    <location>
        <begin position="63"/>
        <end position="84"/>
    </location>
</feature>
<feature type="compositionally biased region" description="Basic and acidic residues" evidence="3">
    <location>
        <begin position="133"/>
        <end position="157"/>
    </location>
</feature>
<feature type="sequence conflict" description="In Ref. 1; CAG38421." evidence="5" ref="1">
    <original>A</original>
    <variation>V</variation>
    <location>
        <position position="5"/>
    </location>
</feature>
<feature type="sequence conflict" description="In Ref. 1; CAG38421." evidence="5" ref="1">
    <original>KVDL</original>
    <variation>N</variation>
    <location>
        <begin position="178"/>
        <end position="181"/>
    </location>
</feature>
<reference key="1">
    <citation type="journal article" date="2006" name="Funct. Integr. Genomics">
        <title>Structure and expression analysis of early auxin-responsive Aux/IAA gene family in rice (Oryza sativa).</title>
        <authorList>
            <person name="Jain M."/>
            <person name="Kaur N."/>
            <person name="Garg R."/>
            <person name="Thakur J.K."/>
            <person name="Tyagi A.K."/>
            <person name="Khurana J.P."/>
        </authorList>
    </citation>
    <scope>NUCLEOTIDE SEQUENCE [MRNA]</scope>
    <scope>TISSUE SPECIFICITY</scope>
    <scope>INDUCTION</scope>
    <scope>NOMENCLATURE</scope>
    <source>
        <strain>cv. Pusa Basmati</strain>
    </source>
</reference>
<reference key="2">
    <citation type="journal article" date="2005" name="PLoS Biol.">
        <title>The genomes of Oryza sativa: a history of duplications.</title>
        <authorList>
            <person name="Yu J."/>
            <person name="Wang J."/>
            <person name="Lin W."/>
            <person name="Li S."/>
            <person name="Li H."/>
            <person name="Zhou J."/>
            <person name="Ni P."/>
            <person name="Dong W."/>
            <person name="Hu S."/>
            <person name="Zeng C."/>
            <person name="Zhang J."/>
            <person name="Zhang Y."/>
            <person name="Li R."/>
            <person name="Xu Z."/>
            <person name="Li S."/>
            <person name="Li X."/>
            <person name="Zheng H."/>
            <person name="Cong L."/>
            <person name="Lin L."/>
            <person name="Yin J."/>
            <person name="Geng J."/>
            <person name="Li G."/>
            <person name="Shi J."/>
            <person name="Liu J."/>
            <person name="Lv H."/>
            <person name="Li J."/>
            <person name="Wang J."/>
            <person name="Deng Y."/>
            <person name="Ran L."/>
            <person name="Shi X."/>
            <person name="Wang X."/>
            <person name="Wu Q."/>
            <person name="Li C."/>
            <person name="Ren X."/>
            <person name="Wang J."/>
            <person name="Wang X."/>
            <person name="Li D."/>
            <person name="Liu D."/>
            <person name="Zhang X."/>
            <person name="Ji Z."/>
            <person name="Zhao W."/>
            <person name="Sun Y."/>
            <person name="Zhang Z."/>
            <person name="Bao J."/>
            <person name="Han Y."/>
            <person name="Dong L."/>
            <person name="Ji J."/>
            <person name="Chen P."/>
            <person name="Wu S."/>
            <person name="Liu J."/>
            <person name="Xiao Y."/>
            <person name="Bu D."/>
            <person name="Tan J."/>
            <person name="Yang L."/>
            <person name="Ye C."/>
            <person name="Zhang J."/>
            <person name="Xu J."/>
            <person name="Zhou Y."/>
            <person name="Yu Y."/>
            <person name="Zhang B."/>
            <person name="Zhuang S."/>
            <person name="Wei H."/>
            <person name="Liu B."/>
            <person name="Lei M."/>
            <person name="Yu H."/>
            <person name="Li Y."/>
            <person name="Xu H."/>
            <person name="Wei S."/>
            <person name="He X."/>
            <person name="Fang L."/>
            <person name="Zhang Z."/>
            <person name="Zhang Y."/>
            <person name="Huang X."/>
            <person name="Su Z."/>
            <person name="Tong W."/>
            <person name="Li J."/>
            <person name="Tong Z."/>
            <person name="Li S."/>
            <person name="Ye J."/>
            <person name="Wang L."/>
            <person name="Fang L."/>
            <person name="Lei T."/>
            <person name="Chen C.-S."/>
            <person name="Chen H.-C."/>
            <person name="Xu Z."/>
            <person name="Li H."/>
            <person name="Huang H."/>
            <person name="Zhang F."/>
            <person name="Xu H."/>
            <person name="Li N."/>
            <person name="Zhao C."/>
            <person name="Li S."/>
            <person name="Dong L."/>
            <person name="Huang Y."/>
            <person name="Li L."/>
            <person name="Xi Y."/>
            <person name="Qi Q."/>
            <person name="Li W."/>
            <person name="Zhang B."/>
            <person name="Hu W."/>
            <person name="Zhang Y."/>
            <person name="Tian X."/>
            <person name="Jiao Y."/>
            <person name="Liang X."/>
            <person name="Jin J."/>
            <person name="Gao L."/>
            <person name="Zheng W."/>
            <person name="Hao B."/>
            <person name="Liu S.-M."/>
            <person name="Wang W."/>
            <person name="Yuan L."/>
            <person name="Cao M."/>
            <person name="McDermott J."/>
            <person name="Samudrala R."/>
            <person name="Wang J."/>
            <person name="Wong G.K.-S."/>
            <person name="Yang H."/>
        </authorList>
    </citation>
    <scope>NUCLEOTIDE SEQUENCE [LARGE SCALE GENOMIC DNA]</scope>
    <source>
        <strain>cv. 93-11</strain>
    </source>
</reference>
<keyword id="KW-0927">Auxin signaling pathway</keyword>
<keyword id="KW-0539">Nucleus</keyword>
<keyword id="KW-1185">Reference proteome</keyword>
<keyword id="KW-0678">Repressor</keyword>
<keyword id="KW-0804">Transcription</keyword>
<keyword id="KW-0805">Transcription regulation</keyword>
<evidence type="ECO:0000250" key="1"/>
<evidence type="ECO:0000255" key="2">
    <source>
        <dbReference type="PROSITE-ProRule" id="PRU01081"/>
    </source>
</evidence>
<evidence type="ECO:0000256" key="3">
    <source>
        <dbReference type="SAM" id="MobiDB-lite"/>
    </source>
</evidence>
<evidence type="ECO:0000269" key="4">
    <source>
    </source>
</evidence>
<evidence type="ECO:0000305" key="5"/>
<comment type="function">
    <text evidence="1">Aux/IAA proteins are short-lived transcriptional factors that function as repressors of early auxin response genes at low auxin concentrations.</text>
</comment>
<comment type="subunit">
    <text evidence="1">Homodimers and heterodimers.</text>
</comment>
<comment type="subcellular location">
    <subcellularLocation>
        <location evidence="1">Nucleus</location>
    </subcellularLocation>
</comment>
<comment type="tissue specificity">
    <text evidence="4">Highly expressed in flowers. Expressed in shoots.</text>
</comment>
<comment type="induction">
    <text evidence="4">By auxin.</text>
</comment>
<comment type="similarity">
    <text evidence="5">Belongs to the Aux/IAA family.</text>
</comment>
<comment type="sequence caution" evidence="5">
    <conflict type="frameshift">
        <sequence resource="EMBL" id="CM000127"/>
    </conflict>
</comment>
<sequence length="281" mass="30097">MRGGAAGPTAGEPPGTEAEAEEVEESSAGDDEELELGLSLGSKKQQQQQHAPCRILTARDLQPAAALSPDSSVSSSSPAAAAAAGGKRAEGPTATTSPGTVASGHPHSSFGVVGWPPIRQFRMNSLFNQAKENTSETDTKKTATNESDVQKDKEEGEKKGRVAGWVKVNMDGEVIGRKVDLNAHRSYKTLALALELMFTKPSIGLCASHNTNSLKLLDNSAEYQLTYEDRDGDWMLVGDVPWEMFVSSVKRLRIMRTSDANGLGQRYQGIHRTIASTRGRS</sequence>